<keyword id="KW-0028">Amino-acid biosynthesis</keyword>
<keyword id="KW-0057">Aromatic amino acid biosynthesis</keyword>
<keyword id="KW-0456">Lyase</keyword>
<keyword id="KW-0663">Pyridoxal phosphate</keyword>
<keyword id="KW-0822">Tryptophan biosynthesis</keyword>
<protein>
    <recommendedName>
        <fullName evidence="1">Tryptophan synthase beta chain</fullName>
        <ecNumber evidence="1">4.2.1.20</ecNumber>
    </recommendedName>
</protein>
<dbReference type="EC" id="4.2.1.20" evidence="1"/>
<dbReference type="EMBL" id="CP001011">
    <property type="protein sequence ID" value="ACB92086.1"/>
    <property type="molecule type" value="Genomic_DNA"/>
</dbReference>
<dbReference type="RefSeq" id="WP_011097720.1">
    <property type="nucleotide sequence ID" value="NC_010577.1"/>
</dbReference>
<dbReference type="SMR" id="B2I9J2"/>
<dbReference type="GeneID" id="93904330"/>
<dbReference type="KEGG" id="xfn:XfasM23_0644"/>
<dbReference type="HOGENOM" id="CLU_016734_3_1_6"/>
<dbReference type="UniPathway" id="UPA00035">
    <property type="reaction ID" value="UER00044"/>
</dbReference>
<dbReference type="Proteomes" id="UP000001698">
    <property type="component" value="Chromosome"/>
</dbReference>
<dbReference type="GO" id="GO:0005737">
    <property type="term" value="C:cytoplasm"/>
    <property type="evidence" value="ECO:0007669"/>
    <property type="project" value="TreeGrafter"/>
</dbReference>
<dbReference type="GO" id="GO:0004834">
    <property type="term" value="F:tryptophan synthase activity"/>
    <property type="evidence" value="ECO:0007669"/>
    <property type="project" value="UniProtKB-UniRule"/>
</dbReference>
<dbReference type="CDD" id="cd06446">
    <property type="entry name" value="Trp-synth_B"/>
    <property type="match status" value="1"/>
</dbReference>
<dbReference type="FunFam" id="3.40.50.1100:FF:000001">
    <property type="entry name" value="Tryptophan synthase beta chain"/>
    <property type="match status" value="1"/>
</dbReference>
<dbReference type="FunFam" id="3.40.50.1100:FF:000004">
    <property type="entry name" value="Tryptophan synthase beta chain"/>
    <property type="match status" value="1"/>
</dbReference>
<dbReference type="Gene3D" id="3.40.50.1100">
    <property type="match status" value="2"/>
</dbReference>
<dbReference type="HAMAP" id="MF_00133">
    <property type="entry name" value="Trp_synth_beta"/>
    <property type="match status" value="1"/>
</dbReference>
<dbReference type="InterPro" id="IPR006653">
    <property type="entry name" value="Trp_synth_b_CS"/>
</dbReference>
<dbReference type="InterPro" id="IPR006654">
    <property type="entry name" value="Trp_synth_beta"/>
</dbReference>
<dbReference type="InterPro" id="IPR023026">
    <property type="entry name" value="Trp_synth_beta/beta-like"/>
</dbReference>
<dbReference type="InterPro" id="IPR001926">
    <property type="entry name" value="TrpB-like_PALP"/>
</dbReference>
<dbReference type="InterPro" id="IPR036052">
    <property type="entry name" value="TrpB-like_PALP_sf"/>
</dbReference>
<dbReference type="NCBIfam" id="TIGR00263">
    <property type="entry name" value="trpB"/>
    <property type="match status" value="1"/>
</dbReference>
<dbReference type="PANTHER" id="PTHR48077:SF3">
    <property type="entry name" value="TRYPTOPHAN SYNTHASE"/>
    <property type="match status" value="1"/>
</dbReference>
<dbReference type="PANTHER" id="PTHR48077">
    <property type="entry name" value="TRYPTOPHAN SYNTHASE-RELATED"/>
    <property type="match status" value="1"/>
</dbReference>
<dbReference type="Pfam" id="PF00291">
    <property type="entry name" value="PALP"/>
    <property type="match status" value="1"/>
</dbReference>
<dbReference type="PIRSF" id="PIRSF001413">
    <property type="entry name" value="Trp_syn_beta"/>
    <property type="match status" value="1"/>
</dbReference>
<dbReference type="SUPFAM" id="SSF53686">
    <property type="entry name" value="Tryptophan synthase beta subunit-like PLP-dependent enzymes"/>
    <property type="match status" value="1"/>
</dbReference>
<dbReference type="PROSITE" id="PS00168">
    <property type="entry name" value="TRP_SYNTHASE_BETA"/>
    <property type="match status" value="1"/>
</dbReference>
<evidence type="ECO:0000255" key="1">
    <source>
        <dbReference type="HAMAP-Rule" id="MF_00133"/>
    </source>
</evidence>
<proteinExistence type="inferred from homology"/>
<organism>
    <name type="scientific">Xylella fastidiosa (strain M23)</name>
    <dbReference type="NCBI Taxonomy" id="405441"/>
    <lineage>
        <taxon>Bacteria</taxon>
        <taxon>Pseudomonadati</taxon>
        <taxon>Pseudomonadota</taxon>
        <taxon>Gammaproteobacteria</taxon>
        <taxon>Lysobacterales</taxon>
        <taxon>Lysobacteraceae</taxon>
        <taxon>Xylella</taxon>
    </lineage>
</organism>
<comment type="function">
    <text evidence="1">The beta subunit is responsible for the synthesis of L-tryptophan from indole and L-serine.</text>
</comment>
<comment type="catalytic activity">
    <reaction evidence="1">
        <text>(1S,2R)-1-C-(indol-3-yl)glycerol 3-phosphate + L-serine = D-glyceraldehyde 3-phosphate + L-tryptophan + H2O</text>
        <dbReference type="Rhea" id="RHEA:10532"/>
        <dbReference type="ChEBI" id="CHEBI:15377"/>
        <dbReference type="ChEBI" id="CHEBI:33384"/>
        <dbReference type="ChEBI" id="CHEBI:57912"/>
        <dbReference type="ChEBI" id="CHEBI:58866"/>
        <dbReference type="ChEBI" id="CHEBI:59776"/>
        <dbReference type="EC" id="4.2.1.20"/>
    </reaction>
</comment>
<comment type="cofactor">
    <cofactor evidence="1">
        <name>pyridoxal 5'-phosphate</name>
        <dbReference type="ChEBI" id="CHEBI:597326"/>
    </cofactor>
</comment>
<comment type="pathway">
    <text evidence="1">Amino-acid biosynthesis; L-tryptophan biosynthesis; L-tryptophan from chorismate: step 5/5.</text>
</comment>
<comment type="subunit">
    <text evidence="1">Tetramer of two alpha and two beta chains.</text>
</comment>
<comment type="similarity">
    <text evidence="1">Belongs to the TrpB family.</text>
</comment>
<feature type="chain" id="PRO_1000095839" description="Tryptophan synthase beta chain">
    <location>
        <begin position="1"/>
        <end position="405"/>
    </location>
</feature>
<feature type="modified residue" description="N6-(pyridoxal phosphate)lysine" evidence="1">
    <location>
        <position position="98"/>
    </location>
</feature>
<sequence length="405" mass="43247">MSDITVANYHAFPDARGHFGRYGGRFVAETLIGPLQELAQAYDAARHDPDFIAAYNKDLKDYVGRPSPIYHAERLSRKVGGAQILLKREDLNHTGAHKINNTIGQALLAARMGKTRIIAETGAGQHGVASATVAARLGLECVVYMGATDIQRQQINVYRMKLLGATVVPVTSGSATLKDALNEAMRDWVTHVGHTFYIIGTVAGPDPYPRMVRDFNAIVGREARAQMIEDYGRLPDAMTACVGGGSNAIGLFHAFLNDASVRIYGAEAAGDGIATGRHAASIVAGRPGVLHGNRTYVVCDDDGQILETHSVSAGLDYPGVGPEHAFLADSGRVQYVGIRDEEALAAFHLLAHTEGILAALESSHAVAHTMTLARDLPKDALVLCNLSGRGDKDVHTIAAREGVRV</sequence>
<reference key="1">
    <citation type="journal article" date="2010" name="J. Bacteriol.">
        <title>Whole genome sequences of two Xylella fastidiosa strains (M12 and M23) causing almond leaf scorch disease in California.</title>
        <authorList>
            <person name="Chen J."/>
            <person name="Xie G."/>
            <person name="Han S."/>
            <person name="Chertkov O."/>
            <person name="Sims D."/>
            <person name="Civerolo E.L."/>
        </authorList>
    </citation>
    <scope>NUCLEOTIDE SEQUENCE [LARGE SCALE GENOMIC DNA]</scope>
    <source>
        <strain>M23</strain>
    </source>
</reference>
<gene>
    <name evidence="1" type="primary">trpB</name>
    <name type="ordered locus">XfasM23_0644</name>
</gene>
<accession>B2I9J2</accession>
<name>TRPB_XYLF2</name>